<sequence>MTEFIPPGSLFHALSSPFPMKRGGQLHRARIAYETWGHLNASATNAILIMPGLSPNAHAAHHDSNAEPGWWESMLGPGKPIDTDRWFVICVNSLGSCKGSTGPASYNPITQAMYRLDFPALSIEDGANAAIEVVHALGIKQLASLIGNSMGGMTALAILLLHPDIARSHINISGSAQALPFSIAIRSLQREAIRLDPHWNQGHYDDTHYPESGLRIARKLGVITYRSALEWDGRFGRVRLDSDQTNDTPFGLEFQIENYLESHAHRFVHTFDPNCYLYLSRSMDWFDVAEYANGDILAGLARIRIQRALAIGSHTDILFPIQQQQQIAEGLRRGGTHATFLGLDSPQGHDAFLVDIAGFGPPVKEFLDEL</sequence>
<organism>
    <name type="scientific">Xylella fastidiosa (strain 9a5c)</name>
    <dbReference type="NCBI Taxonomy" id="160492"/>
    <lineage>
        <taxon>Bacteria</taxon>
        <taxon>Pseudomonadati</taxon>
        <taxon>Pseudomonadota</taxon>
        <taxon>Gammaproteobacteria</taxon>
        <taxon>Lysobacterales</taxon>
        <taxon>Lysobacteraceae</taxon>
        <taxon>Xylella</taxon>
    </lineage>
</organism>
<protein>
    <recommendedName>
        <fullName evidence="1">Serine O-succinyltransferase</fullName>
        <shortName evidence="1">SST</shortName>
        <ecNumber evidence="1">2.3.1.-</ecNumber>
    </recommendedName>
</protein>
<gene>
    <name type="primary">metX</name>
    <name type="ordered locus">XF_2465</name>
</gene>
<reference key="1">
    <citation type="journal article" date="2000" name="Nature">
        <title>The genome sequence of the plant pathogen Xylella fastidiosa.</title>
        <authorList>
            <person name="Simpson A.J.G."/>
            <person name="Reinach F.C."/>
            <person name="Arruda P."/>
            <person name="Abreu F.A."/>
            <person name="Acencio M."/>
            <person name="Alvarenga R."/>
            <person name="Alves L.M.C."/>
            <person name="Araya J.E."/>
            <person name="Baia G.S."/>
            <person name="Baptista C.S."/>
            <person name="Barros M.H."/>
            <person name="Bonaccorsi E.D."/>
            <person name="Bordin S."/>
            <person name="Bove J.M."/>
            <person name="Briones M.R.S."/>
            <person name="Bueno M.R.P."/>
            <person name="Camargo A.A."/>
            <person name="Camargo L.E.A."/>
            <person name="Carraro D.M."/>
            <person name="Carrer H."/>
            <person name="Colauto N.B."/>
            <person name="Colombo C."/>
            <person name="Costa F.F."/>
            <person name="Costa M.C.R."/>
            <person name="Costa-Neto C.M."/>
            <person name="Coutinho L.L."/>
            <person name="Cristofani M."/>
            <person name="Dias-Neto E."/>
            <person name="Docena C."/>
            <person name="El-Dorry H."/>
            <person name="Facincani A.P."/>
            <person name="Ferreira A.J.S."/>
            <person name="Ferreira V.C.A."/>
            <person name="Ferro J.A."/>
            <person name="Fraga J.S."/>
            <person name="Franca S.C."/>
            <person name="Franco M.C."/>
            <person name="Frohme M."/>
            <person name="Furlan L.R."/>
            <person name="Garnier M."/>
            <person name="Goldman G.H."/>
            <person name="Goldman M.H.S."/>
            <person name="Gomes S.L."/>
            <person name="Gruber A."/>
            <person name="Ho P.L."/>
            <person name="Hoheisel J.D."/>
            <person name="Junqueira M.L."/>
            <person name="Kemper E.L."/>
            <person name="Kitajima J.P."/>
            <person name="Krieger J.E."/>
            <person name="Kuramae E.E."/>
            <person name="Laigret F."/>
            <person name="Lambais M.R."/>
            <person name="Leite L.C.C."/>
            <person name="Lemos E.G.M."/>
            <person name="Lemos M.V.F."/>
            <person name="Lopes S.A."/>
            <person name="Lopes C.R."/>
            <person name="Machado J.A."/>
            <person name="Machado M.A."/>
            <person name="Madeira A.M.B.N."/>
            <person name="Madeira H.M.F."/>
            <person name="Marino C.L."/>
            <person name="Marques M.V."/>
            <person name="Martins E.A.L."/>
            <person name="Martins E.M.F."/>
            <person name="Matsukuma A.Y."/>
            <person name="Menck C.F.M."/>
            <person name="Miracca E.C."/>
            <person name="Miyaki C.Y."/>
            <person name="Monteiro-Vitorello C.B."/>
            <person name="Moon D.H."/>
            <person name="Nagai M.A."/>
            <person name="Nascimento A.L.T.O."/>
            <person name="Netto L.E.S."/>
            <person name="Nhani A. Jr."/>
            <person name="Nobrega F.G."/>
            <person name="Nunes L.R."/>
            <person name="Oliveira M.A."/>
            <person name="de Oliveira M.C."/>
            <person name="de Oliveira R.C."/>
            <person name="Palmieri D.A."/>
            <person name="Paris A."/>
            <person name="Peixoto B.R."/>
            <person name="Pereira G.A.G."/>
            <person name="Pereira H.A. Jr."/>
            <person name="Pesquero J.B."/>
            <person name="Quaggio R.B."/>
            <person name="Roberto P.G."/>
            <person name="Rodrigues V."/>
            <person name="de Rosa A.J.M."/>
            <person name="de Rosa V.E. Jr."/>
            <person name="de Sa R.G."/>
            <person name="Santelli R.V."/>
            <person name="Sawasaki H.E."/>
            <person name="da Silva A.C.R."/>
            <person name="da Silva A.M."/>
            <person name="da Silva F.R."/>
            <person name="Silva W.A. Jr."/>
            <person name="da Silveira J.F."/>
            <person name="Silvestri M.L.Z."/>
            <person name="Siqueira W.J."/>
            <person name="de Souza A.A."/>
            <person name="de Souza A.P."/>
            <person name="Terenzi M.F."/>
            <person name="Truffi D."/>
            <person name="Tsai S.M."/>
            <person name="Tsuhako M.H."/>
            <person name="Vallada H."/>
            <person name="Van Sluys M.A."/>
            <person name="Verjovski-Almeida S."/>
            <person name="Vettore A.L."/>
            <person name="Zago M.A."/>
            <person name="Zatz M."/>
            <person name="Meidanis J."/>
            <person name="Setubal J.C."/>
        </authorList>
    </citation>
    <scope>NUCLEOTIDE SEQUENCE [LARGE SCALE GENOMIC DNA]</scope>
    <source>
        <strain>9a5c</strain>
    </source>
</reference>
<keyword id="KW-0012">Acyltransferase</keyword>
<keyword id="KW-0028">Amino-acid biosynthesis</keyword>
<keyword id="KW-0198">Cysteine biosynthesis</keyword>
<keyword id="KW-0963">Cytoplasm</keyword>
<keyword id="KW-0808">Transferase</keyword>
<evidence type="ECO:0000255" key="1">
    <source>
        <dbReference type="HAMAP-Rule" id="MF_00296"/>
    </source>
</evidence>
<comment type="function">
    <text evidence="1">Transfers a succinyl group from succinyl-CoA to L-serine, forming succinyl-L-serine.</text>
</comment>
<comment type="catalytic activity">
    <reaction evidence="1">
        <text>succinyl-CoA + L-serine = O-succinyl-L-serine + CoA</text>
        <dbReference type="Rhea" id="RHEA:52820"/>
        <dbReference type="ChEBI" id="CHEBI:33384"/>
        <dbReference type="ChEBI" id="CHEBI:57287"/>
        <dbReference type="ChEBI" id="CHEBI:57292"/>
        <dbReference type="ChEBI" id="CHEBI:136856"/>
    </reaction>
</comment>
<comment type="pathway">
    <text evidence="1">Amino-acid biosynthesis; L-cysteine biosynthesis; L-cysteine from L-serine: step 1/2.</text>
</comment>
<comment type="subunit">
    <text evidence="1">Homodimer.</text>
</comment>
<comment type="subcellular location">
    <subcellularLocation>
        <location evidence="1">Cytoplasm</location>
    </subcellularLocation>
</comment>
<comment type="similarity">
    <text evidence="1">Belongs to the AB hydrolase superfamily. MetX family.</text>
</comment>
<name>SST_XYLFA</name>
<feature type="chain" id="PRO_0000155748" description="Serine O-succinyltransferase">
    <location>
        <begin position="1"/>
        <end position="370"/>
    </location>
</feature>
<feature type="domain" description="AB hydrolase-1" evidence="1">
    <location>
        <begin position="45"/>
        <end position="354"/>
    </location>
</feature>
<feature type="region of interest" description="Important for substrate specificity" evidence="1">
    <location>
        <begin position="52"/>
        <end position="55"/>
    </location>
</feature>
<feature type="active site" description="Nucleophile" evidence="1">
    <location>
        <position position="149"/>
    </location>
</feature>
<feature type="active site" evidence="1">
    <location>
        <position position="316"/>
    </location>
</feature>
<feature type="active site" evidence="1">
    <location>
        <position position="349"/>
    </location>
</feature>
<feature type="binding site" evidence="1">
    <location>
        <position position="218"/>
    </location>
    <ligand>
        <name>substrate</name>
    </ligand>
</feature>
<feature type="binding site" evidence="1">
    <location>
        <position position="350"/>
    </location>
    <ligand>
        <name>substrate</name>
    </ligand>
</feature>
<feature type="site" description="Important for acyl-CoA specificity" evidence="1">
    <location>
        <position position="186"/>
    </location>
</feature>
<accession>Q9PAN0</accession>
<proteinExistence type="inferred from homology"/>
<dbReference type="EC" id="2.3.1.-" evidence="1"/>
<dbReference type="EMBL" id="AE003849">
    <property type="protein sequence ID" value="AAF85264.1"/>
    <property type="molecule type" value="Genomic_DNA"/>
</dbReference>
<dbReference type="PIR" id="C82553">
    <property type="entry name" value="C82553"/>
</dbReference>
<dbReference type="RefSeq" id="WP_010894909.1">
    <property type="nucleotide sequence ID" value="NC_002488.3"/>
</dbReference>
<dbReference type="SMR" id="Q9PAN0"/>
<dbReference type="STRING" id="160492.XF_2465"/>
<dbReference type="ESTHER" id="xylfa-metx">
    <property type="family name" value="Homoserine_transacetylase"/>
</dbReference>
<dbReference type="KEGG" id="xfa:XF_2465"/>
<dbReference type="PATRIC" id="fig|160492.11.peg.2616"/>
<dbReference type="eggNOG" id="COG2021">
    <property type="taxonomic scope" value="Bacteria"/>
</dbReference>
<dbReference type="HOGENOM" id="CLU_028760_1_2_6"/>
<dbReference type="UniPathway" id="UPA00136">
    <property type="reaction ID" value="UER00199"/>
</dbReference>
<dbReference type="Proteomes" id="UP000000812">
    <property type="component" value="Chromosome"/>
</dbReference>
<dbReference type="GO" id="GO:0005737">
    <property type="term" value="C:cytoplasm"/>
    <property type="evidence" value="ECO:0007669"/>
    <property type="project" value="UniProtKB-SubCell"/>
</dbReference>
<dbReference type="GO" id="GO:0004414">
    <property type="term" value="F:homoserine O-acetyltransferase activity"/>
    <property type="evidence" value="ECO:0007669"/>
    <property type="project" value="TreeGrafter"/>
</dbReference>
<dbReference type="GO" id="GO:0160210">
    <property type="term" value="F:L-serine O-succinyltransferase activity"/>
    <property type="evidence" value="ECO:0007669"/>
    <property type="project" value="RHEA"/>
</dbReference>
<dbReference type="GO" id="GO:0006535">
    <property type="term" value="P:cysteine biosynthetic process from serine"/>
    <property type="evidence" value="ECO:0007669"/>
    <property type="project" value="UniProtKB-UniRule"/>
</dbReference>
<dbReference type="GO" id="GO:0009092">
    <property type="term" value="P:homoserine metabolic process"/>
    <property type="evidence" value="ECO:0007669"/>
    <property type="project" value="TreeGrafter"/>
</dbReference>
<dbReference type="GO" id="GO:0009086">
    <property type="term" value="P:methionine biosynthetic process"/>
    <property type="evidence" value="ECO:0007669"/>
    <property type="project" value="TreeGrafter"/>
</dbReference>
<dbReference type="Gene3D" id="1.10.1740.110">
    <property type="match status" value="1"/>
</dbReference>
<dbReference type="Gene3D" id="3.40.50.1820">
    <property type="entry name" value="alpha/beta hydrolase"/>
    <property type="match status" value="1"/>
</dbReference>
<dbReference type="HAMAP" id="MF_00296">
    <property type="entry name" value="MetX_acyltransf"/>
    <property type="match status" value="1"/>
</dbReference>
<dbReference type="InterPro" id="IPR000073">
    <property type="entry name" value="AB_hydrolase_1"/>
</dbReference>
<dbReference type="InterPro" id="IPR029058">
    <property type="entry name" value="AB_hydrolase_fold"/>
</dbReference>
<dbReference type="InterPro" id="IPR008220">
    <property type="entry name" value="HAT_MetX-like"/>
</dbReference>
<dbReference type="NCBIfam" id="TIGR01392">
    <property type="entry name" value="homoserO_Ac_trn"/>
    <property type="match status" value="1"/>
</dbReference>
<dbReference type="NCBIfam" id="NF001209">
    <property type="entry name" value="PRK00175.1"/>
    <property type="match status" value="1"/>
</dbReference>
<dbReference type="PANTHER" id="PTHR32268">
    <property type="entry name" value="HOMOSERINE O-ACETYLTRANSFERASE"/>
    <property type="match status" value="1"/>
</dbReference>
<dbReference type="PANTHER" id="PTHR32268:SF11">
    <property type="entry name" value="HOMOSERINE O-ACETYLTRANSFERASE"/>
    <property type="match status" value="1"/>
</dbReference>
<dbReference type="Pfam" id="PF00561">
    <property type="entry name" value="Abhydrolase_1"/>
    <property type="match status" value="1"/>
</dbReference>
<dbReference type="PIRSF" id="PIRSF000443">
    <property type="entry name" value="Homoser_Ac_trans"/>
    <property type="match status" value="1"/>
</dbReference>
<dbReference type="SUPFAM" id="SSF53474">
    <property type="entry name" value="alpha/beta-Hydrolases"/>
    <property type="match status" value="1"/>
</dbReference>